<keyword id="KW-0009">Actin-binding</keyword>
<keyword id="KW-1003">Cell membrane</keyword>
<keyword id="KW-0966">Cell projection</keyword>
<keyword id="KW-0963">Cytoplasm</keyword>
<keyword id="KW-0206">Cytoskeleton</keyword>
<keyword id="KW-0472">Membrane</keyword>
<keyword id="KW-0597">Phosphoprotein</keyword>
<keyword id="KW-1185">Reference proteome</keyword>
<evidence type="ECO:0000250" key="1"/>
<evidence type="ECO:0000250" key="2">
    <source>
        <dbReference type="UniProtKB" id="Q9Y6W5"/>
    </source>
</evidence>
<evidence type="ECO:0000255" key="3">
    <source>
        <dbReference type="PROSITE-ProRule" id="PRU00406"/>
    </source>
</evidence>
<evidence type="ECO:0000256" key="4">
    <source>
        <dbReference type="SAM" id="MobiDB-lite"/>
    </source>
</evidence>
<evidence type="ECO:0000305" key="5"/>
<evidence type="ECO:0000312" key="6">
    <source>
        <dbReference type="MGI" id="MGI:1098641"/>
    </source>
</evidence>
<name>WASF2_MOUSE</name>
<comment type="function">
    <text evidence="2">Downstream effector molecule involved in the transmission of signals from tyrosine kinase receptors and small GTPases to the actin cytoskeleton. Promotes formation of actin filaments. Part of the WAVE complex that regulates lamellipodia formation. The WAVE complex regulates actin filament reorganization via its interaction with the Arp2/3 complex (By similarity).</text>
</comment>
<comment type="subunit">
    <text evidence="2">Binds actin and the Arp2/3 complex. Interacts with BAIAP2. Component of the WAVE2 complex composed of ABI1, CYFIP1/SRA1, NCKAP1/NAP1 (NCKAP1l/HEM1 in hematopoietic cells) and WASF2/WAVE2. Directly interacts with BRK1. Interacts with human cytomegalovirus protein UL135. Interacts with FNBP1L (via the SH3 domain).</text>
</comment>
<comment type="interaction">
    <interactant intactId="EBI-643162">
        <id>Q8BH43</id>
    </interactant>
    <interactant intactId="EBI-375511">
        <id>Q8CBW3</id>
        <label>Abi1</label>
    </interactant>
    <organismsDiffer>false</organismsDiffer>
    <experiments>2</experiments>
</comment>
<comment type="interaction">
    <interactant intactId="EBI-643162">
        <id>Q8BH43</id>
    </interactant>
    <interactant intactId="EBI-643470">
        <id>Q8CHG3</id>
        <label>Gcc2</label>
    </interactant>
    <organismsDiffer>false</organismsDiffer>
    <experiments>6</experiments>
</comment>
<comment type="interaction">
    <interactant intactId="EBI-643162">
        <id>Q8BH43</id>
    </interactant>
    <interactant intactId="EBI-3294998">
        <id>Q3URD3-4</id>
        <label>Slmap</label>
    </interactant>
    <organismsDiffer>false</organismsDiffer>
    <experiments>3</experiments>
</comment>
<comment type="interaction">
    <interactant intactId="EBI-643162">
        <id>Q8BH43</id>
    </interactant>
    <interactant intactId="EBI-643436">
        <id>Q8CG48</id>
        <label>Smc2</label>
    </interactant>
    <organismsDiffer>false</organismsDiffer>
    <experiments>4</experiments>
</comment>
<comment type="subcellular location">
    <subcellularLocation>
        <location evidence="1">Cytoplasm</location>
        <location evidence="1">Cytoskeleton</location>
    </subcellularLocation>
    <subcellularLocation>
        <location evidence="1">Cell projection</location>
        <location evidence="1">Lamellipodium</location>
    </subcellularLocation>
    <subcellularLocation>
        <location evidence="2">Basolateral cell membrane</location>
    </subcellularLocation>
    <text evidence="1">At the interface between the lamellipodial actin meshwork and the membrane.</text>
</comment>
<comment type="domain">
    <text evidence="2">Binds and activates the Arp2/3 complex via the C-terminal domain. Interacts with actin via the WH2 domain (By similarity).</text>
</comment>
<comment type="similarity">
    <text evidence="5">Belongs to the SCAR/WAVE family.</text>
</comment>
<reference key="1">
    <citation type="journal article" date="2003" name="Mamm. Genome">
        <title>Genomic organization and expression profile of the human and mouse WAVE gene family.</title>
        <authorList>
            <person name="Sossey-Alaoui K."/>
            <person name="Head K."/>
            <person name="Nowak N."/>
            <person name="Cowell J.K."/>
        </authorList>
    </citation>
    <scope>NUCLEOTIDE SEQUENCE [MRNA]</scope>
</reference>
<reference key="2">
    <citation type="journal article" date="2005" name="Science">
        <title>The transcriptional landscape of the mammalian genome.</title>
        <authorList>
            <person name="Carninci P."/>
            <person name="Kasukawa T."/>
            <person name="Katayama S."/>
            <person name="Gough J."/>
            <person name="Frith M.C."/>
            <person name="Maeda N."/>
            <person name="Oyama R."/>
            <person name="Ravasi T."/>
            <person name="Lenhard B."/>
            <person name="Wells C."/>
            <person name="Kodzius R."/>
            <person name="Shimokawa K."/>
            <person name="Bajic V.B."/>
            <person name="Brenner S.E."/>
            <person name="Batalov S."/>
            <person name="Forrest A.R."/>
            <person name="Zavolan M."/>
            <person name="Davis M.J."/>
            <person name="Wilming L.G."/>
            <person name="Aidinis V."/>
            <person name="Allen J.E."/>
            <person name="Ambesi-Impiombato A."/>
            <person name="Apweiler R."/>
            <person name="Aturaliya R.N."/>
            <person name="Bailey T.L."/>
            <person name="Bansal M."/>
            <person name="Baxter L."/>
            <person name="Beisel K.W."/>
            <person name="Bersano T."/>
            <person name="Bono H."/>
            <person name="Chalk A.M."/>
            <person name="Chiu K.P."/>
            <person name="Choudhary V."/>
            <person name="Christoffels A."/>
            <person name="Clutterbuck D.R."/>
            <person name="Crowe M.L."/>
            <person name="Dalla E."/>
            <person name="Dalrymple B.P."/>
            <person name="de Bono B."/>
            <person name="Della Gatta G."/>
            <person name="di Bernardo D."/>
            <person name="Down T."/>
            <person name="Engstrom P."/>
            <person name="Fagiolini M."/>
            <person name="Faulkner G."/>
            <person name="Fletcher C.F."/>
            <person name="Fukushima T."/>
            <person name="Furuno M."/>
            <person name="Futaki S."/>
            <person name="Gariboldi M."/>
            <person name="Georgii-Hemming P."/>
            <person name="Gingeras T.R."/>
            <person name="Gojobori T."/>
            <person name="Green R.E."/>
            <person name="Gustincich S."/>
            <person name="Harbers M."/>
            <person name="Hayashi Y."/>
            <person name="Hensch T.K."/>
            <person name="Hirokawa N."/>
            <person name="Hill D."/>
            <person name="Huminiecki L."/>
            <person name="Iacono M."/>
            <person name="Ikeo K."/>
            <person name="Iwama A."/>
            <person name="Ishikawa T."/>
            <person name="Jakt M."/>
            <person name="Kanapin A."/>
            <person name="Katoh M."/>
            <person name="Kawasawa Y."/>
            <person name="Kelso J."/>
            <person name="Kitamura H."/>
            <person name="Kitano H."/>
            <person name="Kollias G."/>
            <person name="Krishnan S.P."/>
            <person name="Kruger A."/>
            <person name="Kummerfeld S.K."/>
            <person name="Kurochkin I.V."/>
            <person name="Lareau L.F."/>
            <person name="Lazarevic D."/>
            <person name="Lipovich L."/>
            <person name="Liu J."/>
            <person name="Liuni S."/>
            <person name="McWilliam S."/>
            <person name="Madan Babu M."/>
            <person name="Madera M."/>
            <person name="Marchionni L."/>
            <person name="Matsuda H."/>
            <person name="Matsuzawa S."/>
            <person name="Miki H."/>
            <person name="Mignone F."/>
            <person name="Miyake S."/>
            <person name="Morris K."/>
            <person name="Mottagui-Tabar S."/>
            <person name="Mulder N."/>
            <person name="Nakano N."/>
            <person name="Nakauchi H."/>
            <person name="Ng P."/>
            <person name="Nilsson R."/>
            <person name="Nishiguchi S."/>
            <person name="Nishikawa S."/>
            <person name="Nori F."/>
            <person name="Ohara O."/>
            <person name="Okazaki Y."/>
            <person name="Orlando V."/>
            <person name="Pang K.C."/>
            <person name="Pavan W.J."/>
            <person name="Pavesi G."/>
            <person name="Pesole G."/>
            <person name="Petrovsky N."/>
            <person name="Piazza S."/>
            <person name="Reed J."/>
            <person name="Reid J.F."/>
            <person name="Ring B.Z."/>
            <person name="Ringwald M."/>
            <person name="Rost B."/>
            <person name="Ruan Y."/>
            <person name="Salzberg S.L."/>
            <person name="Sandelin A."/>
            <person name="Schneider C."/>
            <person name="Schoenbach C."/>
            <person name="Sekiguchi K."/>
            <person name="Semple C.A."/>
            <person name="Seno S."/>
            <person name="Sessa L."/>
            <person name="Sheng Y."/>
            <person name="Shibata Y."/>
            <person name="Shimada H."/>
            <person name="Shimada K."/>
            <person name="Silva D."/>
            <person name="Sinclair B."/>
            <person name="Sperling S."/>
            <person name="Stupka E."/>
            <person name="Sugiura K."/>
            <person name="Sultana R."/>
            <person name="Takenaka Y."/>
            <person name="Taki K."/>
            <person name="Tammoja K."/>
            <person name="Tan S.L."/>
            <person name="Tang S."/>
            <person name="Taylor M.S."/>
            <person name="Tegner J."/>
            <person name="Teichmann S.A."/>
            <person name="Ueda H.R."/>
            <person name="van Nimwegen E."/>
            <person name="Verardo R."/>
            <person name="Wei C.L."/>
            <person name="Yagi K."/>
            <person name="Yamanishi H."/>
            <person name="Zabarovsky E."/>
            <person name="Zhu S."/>
            <person name="Zimmer A."/>
            <person name="Hide W."/>
            <person name="Bult C."/>
            <person name="Grimmond S.M."/>
            <person name="Teasdale R.D."/>
            <person name="Liu E.T."/>
            <person name="Brusic V."/>
            <person name="Quackenbush J."/>
            <person name="Wahlestedt C."/>
            <person name="Mattick J.S."/>
            <person name="Hume D.A."/>
            <person name="Kai C."/>
            <person name="Sasaki D."/>
            <person name="Tomaru Y."/>
            <person name="Fukuda S."/>
            <person name="Kanamori-Katayama M."/>
            <person name="Suzuki M."/>
            <person name="Aoki J."/>
            <person name="Arakawa T."/>
            <person name="Iida J."/>
            <person name="Imamura K."/>
            <person name="Itoh M."/>
            <person name="Kato T."/>
            <person name="Kawaji H."/>
            <person name="Kawagashira N."/>
            <person name="Kawashima T."/>
            <person name="Kojima M."/>
            <person name="Kondo S."/>
            <person name="Konno H."/>
            <person name="Nakano K."/>
            <person name="Ninomiya N."/>
            <person name="Nishio T."/>
            <person name="Okada M."/>
            <person name="Plessy C."/>
            <person name="Shibata K."/>
            <person name="Shiraki T."/>
            <person name="Suzuki S."/>
            <person name="Tagami M."/>
            <person name="Waki K."/>
            <person name="Watahiki A."/>
            <person name="Okamura-Oho Y."/>
            <person name="Suzuki H."/>
            <person name="Kawai J."/>
            <person name="Hayashizaki Y."/>
        </authorList>
    </citation>
    <scope>NUCLEOTIDE SEQUENCE [LARGE SCALE MRNA]</scope>
    <source>
        <strain>C57BL/6J</strain>
        <tissue>Kidney</tissue>
    </source>
</reference>
<reference key="3">
    <citation type="journal article" date="2004" name="EMBO J.">
        <title>Sra-1 and Nap1 link Rac to actin assembly driving lamellipodia formation.</title>
        <authorList>
            <person name="Steffen A."/>
            <person name="Rottner K."/>
            <person name="Ehinger J."/>
            <person name="Innocenti M."/>
            <person name="Scita G."/>
            <person name="Wehland J."/>
            <person name="Stradal T.E.B."/>
        </authorList>
    </citation>
    <scope>COMPONENT OF WAVE2 COMPLEX</scope>
    <source>
        <strain>C57BL/6J</strain>
        <tissue>Brain</tissue>
    </source>
</reference>
<reference key="4">
    <citation type="journal article" date="2010" name="Cell">
        <title>A tissue-specific atlas of mouse protein phosphorylation and expression.</title>
        <authorList>
            <person name="Huttlin E.L."/>
            <person name="Jedrychowski M.P."/>
            <person name="Elias J.E."/>
            <person name="Goswami T."/>
            <person name="Rad R."/>
            <person name="Beausoleil S.A."/>
            <person name="Villen J."/>
            <person name="Haas W."/>
            <person name="Sowa M.E."/>
            <person name="Gygi S.P."/>
        </authorList>
    </citation>
    <scope>IDENTIFICATION BY MASS SPECTROMETRY [LARGE SCALE ANALYSIS]</scope>
    <source>
        <tissue>Brain</tissue>
        <tissue>Brown adipose tissue</tissue>
        <tissue>Heart</tissue>
        <tissue>Kidney</tissue>
        <tissue>Liver</tissue>
        <tissue>Lung</tissue>
        <tissue>Pancreas</tissue>
        <tissue>Spleen</tissue>
        <tissue>Testis</tissue>
    </source>
</reference>
<protein>
    <recommendedName>
        <fullName evidence="5">Actin-binding protein WASF2</fullName>
    </recommendedName>
    <alternativeName>
        <fullName>Protein WAVE-2</fullName>
    </alternativeName>
    <alternativeName>
        <fullName>Wiskott-Aldrich syndrome protein family member 2</fullName>
        <shortName>WASP family protein member 2</shortName>
    </alternativeName>
</protein>
<gene>
    <name evidence="6" type="primary">Wasf2</name>
    <name evidence="6" type="synonym">Wave2</name>
</gene>
<dbReference type="EMBL" id="AY135643">
    <property type="protein sequence ID" value="AAN10152.1"/>
    <property type="molecule type" value="mRNA"/>
</dbReference>
<dbReference type="EMBL" id="AK085458">
    <property type="protein sequence ID" value="BAC39451.1"/>
    <property type="molecule type" value="mRNA"/>
</dbReference>
<dbReference type="CCDS" id="CCDS18742.1"/>
<dbReference type="RefSeq" id="NP_001406372.1">
    <property type="nucleotide sequence ID" value="NM_001419443.1"/>
</dbReference>
<dbReference type="RefSeq" id="NP_001406373.1">
    <property type="nucleotide sequence ID" value="NM_001419444.1"/>
</dbReference>
<dbReference type="RefSeq" id="NP_700472.1">
    <property type="nucleotide sequence ID" value="NM_153423.7"/>
</dbReference>
<dbReference type="RefSeq" id="XP_006538911.1">
    <property type="nucleotide sequence ID" value="XM_006538848.5"/>
</dbReference>
<dbReference type="RefSeq" id="XP_006538912.1">
    <property type="nucleotide sequence ID" value="XM_006538849.5"/>
</dbReference>
<dbReference type="RefSeq" id="XP_006538913.1">
    <property type="nucleotide sequence ID" value="XM_006538850.3"/>
</dbReference>
<dbReference type="SMR" id="Q8BH43"/>
<dbReference type="BioGRID" id="232443">
    <property type="interactions" value="14"/>
</dbReference>
<dbReference type="CORUM" id="Q8BH43"/>
<dbReference type="DIP" id="DIP-29535N"/>
<dbReference type="FunCoup" id="Q8BH43">
    <property type="interactions" value="2692"/>
</dbReference>
<dbReference type="IntAct" id="Q8BH43">
    <property type="interactions" value="17"/>
</dbReference>
<dbReference type="MINT" id="Q8BH43"/>
<dbReference type="STRING" id="10090.ENSMUSP00000081263"/>
<dbReference type="GlyGen" id="Q8BH43">
    <property type="glycosylation" value="3 sites, 1 N-linked glycan (1 site), 1 O-linked glycan (1 site)"/>
</dbReference>
<dbReference type="iPTMnet" id="Q8BH43"/>
<dbReference type="PhosphoSitePlus" id="Q8BH43"/>
<dbReference type="jPOST" id="Q8BH43"/>
<dbReference type="PaxDb" id="10090-ENSMUSP00000081263"/>
<dbReference type="PeptideAtlas" id="Q8BH43"/>
<dbReference type="ProteomicsDB" id="299963"/>
<dbReference type="Pumba" id="Q8BH43"/>
<dbReference type="Antibodypedia" id="30784">
    <property type="antibodies" value="348 antibodies from 32 providers"/>
</dbReference>
<dbReference type="DNASU" id="242687"/>
<dbReference type="Ensembl" id="ENSMUST00000084241.12">
    <property type="protein sequence ID" value="ENSMUSP00000081263.6"/>
    <property type="gene ID" value="ENSMUSG00000028868.14"/>
</dbReference>
<dbReference type="Ensembl" id="ENSMUST00000105912.2">
    <property type="protein sequence ID" value="ENSMUSP00000101532.2"/>
    <property type="gene ID" value="ENSMUSG00000028868.14"/>
</dbReference>
<dbReference type="GeneID" id="242687"/>
<dbReference type="KEGG" id="mmu:242687"/>
<dbReference type="UCSC" id="uc008vcf.1">
    <property type="organism name" value="mouse"/>
</dbReference>
<dbReference type="AGR" id="MGI:1098641"/>
<dbReference type="CTD" id="10163"/>
<dbReference type="MGI" id="MGI:1098641">
    <property type="gene designation" value="Wasf2"/>
</dbReference>
<dbReference type="VEuPathDB" id="HostDB:ENSMUSG00000028868"/>
<dbReference type="eggNOG" id="KOG1830">
    <property type="taxonomic scope" value="Eukaryota"/>
</dbReference>
<dbReference type="GeneTree" id="ENSGT00950000182962"/>
<dbReference type="HOGENOM" id="CLU_036022_2_0_1"/>
<dbReference type="InParanoid" id="Q8BH43"/>
<dbReference type="OMA" id="PDMAYND"/>
<dbReference type="OrthoDB" id="1060785at2759"/>
<dbReference type="PhylomeDB" id="Q8BH43"/>
<dbReference type="TreeFam" id="TF315031"/>
<dbReference type="Reactome" id="R-MMU-2029482">
    <property type="pathway name" value="Regulation of actin dynamics for phagocytic cup formation"/>
</dbReference>
<dbReference type="Reactome" id="R-MMU-4420097">
    <property type="pathway name" value="VEGFA-VEGFR2 Pathway"/>
</dbReference>
<dbReference type="Reactome" id="R-MMU-5663213">
    <property type="pathway name" value="RHO GTPases Activate WASPs and WAVEs"/>
</dbReference>
<dbReference type="Reactome" id="R-MMU-9013149">
    <property type="pathway name" value="RAC1 GTPase cycle"/>
</dbReference>
<dbReference type="Reactome" id="R-MMU-9013404">
    <property type="pathway name" value="RAC2 GTPase cycle"/>
</dbReference>
<dbReference type="Reactome" id="R-MMU-9013423">
    <property type="pathway name" value="RAC3 GTPase cycle"/>
</dbReference>
<dbReference type="BioGRID-ORCS" id="242687">
    <property type="hits" value="7 hits in 78 CRISPR screens"/>
</dbReference>
<dbReference type="CD-CODE" id="CE726F99">
    <property type="entry name" value="Postsynaptic density"/>
</dbReference>
<dbReference type="ChiTaRS" id="Wasf2">
    <property type="organism name" value="mouse"/>
</dbReference>
<dbReference type="PRO" id="PR:Q8BH43"/>
<dbReference type="Proteomes" id="UP000000589">
    <property type="component" value="Chromosome 4"/>
</dbReference>
<dbReference type="RNAct" id="Q8BH43">
    <property type="molecule type" value="protein"/>
</dbReference>
<dbReference type="Bgee" id="ENSMUSG00000028868">
    <property type="expression patterns" value="Expressed in animal zygote and 242 other cell types or tissues"/>
</dbReference>
<dbReference type="ExpressionAtlas" id="Q8BH43">
    <property type="expression patterns" value="baseline and differential"/>
</dbReference>
<dbReference type="GO" id="GO:0016323">
    <property type="term" value="C:basolateral plasma membrane"/>
    <property type="evidence" value="ECO:0007669"/>
    <property type="project" value="UniProtKB-SubCell"/>
</dbReference>
<dbReference type="GO" id="GO:0005911">
    <property type="term" value="C:cell-cell junction"/>
    <property type="evidence" value="ECO:0000314"/>
    <property type="project" value="MGI"/>
</dbReference>
<dbReference type="GO" id="GO:0005856">
    <property type="term" value="C:cytoskeleton"/>
    <property type="evidence" value="ECO:0007669"/>
    <property type="project" value="UniProtKB-SubCell"/>
</dbReference>
<dbReference type="GO" id="GO:0005769">
    <property type="term" value="C:early endosome"/>
    <property type="evidence" value="ECO:0000314"/>
    <property type="project" value="MGI"/>
</dbReference>
<dbReference type="GO" id="GO:0030027">
    <property type="term" value="C:lamellipodium"/>
    <property type="evidence" value="ECO:0000314"/>
    <property type="project" value="MGI"/>
</dbReference>
<dbReference type="GO" id="GO:0001726">
    <property type="term" value="C:ruffle"/>
    <property type="evidence" value="ECO:0000314"/>
    <property type="project" value="MGI"/>
</dbReference>
<dbReference type="GO" id="GO:0031209">
    <property type="term" value="C:SCAR complex"/>
    <property type="evidence" value="ECO:0000314"/>
    <property type="project" value="ARUK-UCL"/>
</dbReference>
<dbReference type="GO" id="GO:0045202">
    <property type="term" value="C:synapse"/>
    <property type="evidence" value="ECO:0000314"/>
    <property type="project" value="SynGO"/>
</dbReference>
<dbReference type="GO" id="GO:0003779">
    <property type="term" value="F:actin binding"/>
    <property type="evidence" value="ECO:0007669"/>
    <property type="project" value="UniProtKB-KW"/>
</dbReference>
<dbReference type="GO" id="GO:0051018">
    <property type="term" value="F:protein kinase A binding"/>
    <property type="evidence" value="ECO:0007669"/>
    <property type="project" value="Ensembl"/>
</dbReference>
<dbReference type="GO" id="GO:0017124">
    <property type="term" value="F:SH3 domain binding"/>
    <property type="evidence" value="ECO:0007669"/>
    <property type="project" value="Ensembl"/>
</dbReference>
<dbReference type="GO" id="GO:0030036">
    <property type="term" value="P:actin cytoskeleton organization"/>
    <property type="evidence" value="ECO:0000315"/>
    <property type="project" value="MGI"/>
</dbReference>
<dbReference type="GO" id="GO:0030048">
    <property type="term" value="P:actin filament-based movement"/>
    <property type="evidence" value="ECO:0000315"/>
    <property type="project" value="MGI"/>
</dbReference>
<dbReference type="GO" id="GO:0001667">
    <property type="term" value="P:ameboidal-type cell migration"/>
    <property type="evidence" value="ECO:0000315"/>
    <property type="project" value="MGI"/>
</dbReference>
<dbReference type="GO" id="GO:0001525">
    <property type="term" value="P:angiogenesis"/>
    <property type="evidence" value="ECO:0000315"/>
    <property type="project" value="MGI"/>
</dbReference>
<dbReference type="GO" id="GO:0048870">
    <property type="term" value="P:cell motility"/>
    <property type="evidence" value="ECO:0000315"/>
    <property type="project" value="MGI"/>
</dbReference>
<dbReference type="GO" id="GO:0006897">
    <property type="term" value="P:endocytosis"/>
    <property type="evidence" value="ECO:0000314"/>
    <property type="project" value="MGI"/>
</dbReference>
<dbReference type="GO" id="GO:0030032">
    <property type="term" value="P:lamellipodium assembly"/>
    <property type="evidence" value="ECO:0000315"/>
    <property type="project" value="MGI"/>
</dbReference>
<dbReference type="GO" id="GO:0072673">
    <property type="term" value="P:lamellipodium morphogenesis"/>
    <property type="evidence" value="ECO:0000315"/>
    <property type="project" value="MGI"/>
</dbReference>
<dbReference type="GO" id="GO:0035855">
    <property type="term" value="P:megakaryocyte development"/>
    <property type="evidence" value="ECO:0000315"/>
    <property type="project" value="MGI"/>
</dbReference>
<dbReference type="GO" id="GO:0051497">
    <property type="term" value="P:negative regulation of stress fiber assembly"/>
    <property type="evidence" value="ECO:0007669"/>
    <property type="project" value="Ensembl"/>
</dbReference>
<dbReference type="GO" id="GO:0001764">
    <property type="term" value="P:neuron migration"/>
    <property type="evidence" value="ECO:0000314"/>
    <property type="project" value="MGI"/>
</dbReference>
<dbReference type="GO" id="GO:0010592">
    <property type="term" value="P:positive regulation of lamellipodium assembly"/>
    <property type="evidence" value="ECO:0007669"/>
    <property type="project" value="Ensembl"/>
</dbReference>
<dbReference type="GO" id="GO:0099173">
    <property type="term" value="P:postsynapse organization"/>
    <property type="evidence" value="ECO:0000314"/>
    <property type="project" value="SynGO"/>
</dbReference>
<dbReference type="GO" id="GO:0098974">
    <property type="term" value="P:postsynaptic actin cytoskeleton organization"/>
    <property type="evidence" value="ECO:0000314"/>
    <property type="project" value="SynGO"/>
</dbReference>
<dbReference type="GO" id="GO:0016601">
    <property type="term" value="P:Rac protein signal transduction"/>
    <property type="evidence" value="ECO:0000315"/>
    <property type="project" value="MGI"/>
</dbReference>
<dbReference type="FunFam" id="1.20.5.340:FF:000012">
    <property type="entry name" value="Wiskott-Aldrich syndrome protein family member 1"/>
    <property type="match status" value="1"/>
</dbReference>
<dbReference type="Gene3D" id="1.20.5.340">
    <property type="match status" value="1"/>
</dbReference>
<dbReference type="Gene3D" id="6.10.280.150">
    <property type="match status" value="2"/>
</dbReference>
<dbReference type="InterPro" id="IPR028288">
    <property type="entry name" value="SCAR/WAVE_fam"/>
</dbReference>
<dbReference type="InterPro" id="IPR003124">
    <property type="entry name" value="WH2_dom"/>
</dbReference>
<dbReference type="PANTHER" id="PTHR12902">
    <property type="entry name" value="WASP-1"/>
    <property type="match status" value="1"/>
</dbReference>
<dbReference type="PANTHER" id="PTHR12902:SF1">
    <property type="entry name" value="WISKOTT-ALDRICH SYNDROME PROTEIN FAMILY MEMBER"/>
    <property type="match status" value="1"/>
</dbReference>
<dbReference type="Pfam" id="PF02205">
    <property type="entry name" value="WH2"/>
    <property type="match status" value="1"/>
</dbReference>
<dbReference type="SMART" id="SM00246">
    <property type="entry name" value="WH2"/>
    <property type="match status" value="1"/>
</dbReference>
<dbReference type="PROSITE" id="PS51082">
    <property type="entry name" value="WH2"/>
    <property type="match status" value="1"/>
</dbReference>
<proteinExistence type="evidence at protein level"/>
<organism>
    <name type="scientific">Mus musculus</name>
    <name type="common">Mouse</name>
    <dbReference type="NCBI Taxonomy" id="10090"/>
    <lineage>
        <taxon>Eukaryota</taxon>
        <taxon>Metazoa</taxon>
        <taxon>Chordata</taxon>
        <taxon>Craniata</taxon>
        <taxon>Vertebrata</taxon>
        <taxon>Euteleostomi</taxon>
        <taxon>Mammalia</taxon>
        <taxon>Eutheria</taxon>
        <taxon>Euarchontoglires</taxon>
        <taxon>Glires</taxon>
        <taxon>Rodentia</taxon>
        <taxon>Myomorpha</taxon>
        <taxon>Muroidea</taxon>
        <taxon>Muridae</taxon>
        <taxon>Murinae</taxon>
        <taxon>Mus</taxon>
        <taxon>Mus</taxon>
    </lineage>
</organism>
<accession>Q8BH43</accession>
<feature type="chain" id="PRO_0000188995" description="Actin-binding protein WASF2">
    <location>
        <begin position="1"/>
        <end position="497"/>
    </location>
</feature>
<feature type="domain" description="WH2" evidence="3">
    <location>
        <begin position="435"/>
        <end position="452"/>
    </location>
</feature>
<feature type="region of interest" description="Disordered" evidence="4">
    <location>
        <begin position="173"/>
        <end position="203"/>
    </location>
</feature>
<feature type="region of interest" description="Disordered" evidence="4">
    <location>
        <begin position="239"/>
        <end position="436"/>
    </location>
</feature>
<feature type="compositionally biased region" description="Low complexity" evidence="4">
    <location>
        <begin position="252"/>
        <end position="263"/>
    </location>
</feature>
<feature type="compositionally biased region" description="Pro residues" evidence="4">
    <location>
        <begin position="298"/>
        <end position="335"/>
    </location>
</feature>
<feature type="compositionally biased region" description="Pro residues" evidence="4">
    <location>
        <begin position="343"/>
        <end position="403"/>
    </location>
</feature>
<feature type="modified residue" description="Phosphoserine" evidence="2">
    <location>
        <position position="473"/>
    </location>
</feature>
<sequence>MPLVTRNIEPRHLCRQTLPSDTSELECRTNITLANVIRQLGSLSKYAEDIFGEICTQASAFASRVNSLAERVDRVQVKVTQLDPKEEEVSLQGINTRKAFRSSTTQDQKLFDRNSLPVPVLETYNSCDAPPPLNNLSPYRDDGKEALKFYTNPSYFFDLWKEKMLQDTKDIMKEKRKHRKEKKDNPNRGNVNPRKIKTRKEEWEKMKMGQEFVESKERLGPSGYSSTLVYQNGSIGSVENVDAASYPPPPQSDSASSPSPSFSEDNLPPPPAEFSYPADNQRGSVLAGPKRTSMVSPSHPPPAPPLSSPPGPKPGFAPPPAPPPPPPMSVPPPLPSMGFGSPGTPPPPSPPSFPPHPDFAAPPPPPPPPAADYPMPPPPLSQPSGGAPPPPPPPPPPGPPPLPFSGADGQPAAPPPPPPSEATKPKSSLPAVSDARSDLLSAIRQGFQLRRVEEQREQEKRDVVGNDVATILSRRIAVEYSDSEDDSSEFDEDDWSD</sequence>